<accession>A7ZWT4</accession>
<protein>
    <recommendedName>
        <fullName evidence="1">Large ribosomal subunit protein bL31B</fullName>
    </recommendedName>
    <alternativeName>
        <fullName evidence="2">50S ribosomal protein L31 type B</fullName>
    </alternativeName>
</protein>
<comment type="subunit">
    <text evidence="1">Part of the 50S ribosomal subunit.</text>
</comment>
<comment type="similarity">
    <text evidence="1">Belongs to the bacterial ribosomal protein bL31 family. Type B subfamily.</text>
</comment>
<keyword id="KW-0687">Ribonucleoprotein</keyword>
<keyword id="KW-0689">Ribosomal protein</keyword>
<dbReference type="EMBL" id="CP000802">
    <property type="protein sequence ID" value="ABV04738.1"/>
    <property type="molecule type" value="Genomic_DNA"/>
</dbReference>
<dbReference type="RefSeq" id="WP_000803990.1">
    <property type="nucleotide sequence ID" value="NC_009800.1"/>
</dbReference>
<dbReference type="SMR" id="A7ZWT4"/>
<dbReference type="KEGG" id="ecx:EcHS_A0350"/>
<dbReference type="HOGENOM" id="CLU_114306_2_1_6"/>
<dbReference type="GO" id="GO:1990904">
    <property type="term" value="C:ribonucleoprotein complex"/>
    <property type="evidence" value="ECO:0007669"/>
    <property type="project" value="UniProtKB-KW"/>
</dbReference>
<dbReference type="GO" id="GO:0005840">
    <property type="term" value="C:ribosome"/>
    <property type="evidence" value="ECO:0007669"/>
    <property type="project" value="UniProtKB-KW"/>
</dbReference>
<dbReference type="GO" id="GO:0003735">
    <property type="term" value="F:structural constituent of ribosome"/>
    <property type="evidence" value="ECO:0007669"/>
    <property type="project" value="InterPro"/>
</dbReference>
<dbReference type="GO" id="GO:0006412">
    <property type="term" value="P:translation"/>
    <property type="evidence" value="ECO:0007669"/>
    <property type="project" value="UniProtKB-UniRule"/>
</dbReference>
<dbReference type="FunFam" id="4.10.830.30:FF:000002">
    <property type="entry name" value="50S ribosomal protein L31 type B"/>
    <property type="match status" value="1"/>
</dbReference>
<dbReference type="Gene3D" id="4.10.830.30">
    <property type="entry name" value="Ribosomal protein L31"/>
    <property type="match status" value="1"/>
</dbReference>
<dbReference type="HAMAP" id="MF_00502">
    <property type="entry name" value="Ribosomal_bL31_2"/>
    <property type="match status" value="1"/>
</dbReference>
<dbReference type="InterPro" id="IPR034704">
    <property type="entry name" value="Ribosomal_bL28/bL31-like_sf"/>
</dbReference>
<dbReference type="InterPro" id="IPR002150">
    <property type="entry name" value="Ribosomal_bL31"/>
</dbReference>
<dbReference type="InterPro" id="IPR027493">
    <property type="entry name" value="Ribosomal_bL31_B"/>
</dbReference>
<dbReference type="InterPro" id="IPR042105">
    <property type="entry name" value="Ribosomal_bL31_sf"/>
</dbReference>
<dbReference type="NCBIfam" id="TIGR00105">
    <property type="entry name" value="L31"/>
    <property type="match status" value="1"/>
</dbReference>
<dbReference type="NCBIfam" id="NF002462">
    <property type="entry name" value="PRK01678.1"/>
    <property type="match status" value="1"/>
</dbReference>
<dbReference type="PANTHER" id="PTHR33280">
    <property type="entry name" value="50S RIBOSOMAL PROTEIN L31, CHLOROPLASTIC"/>
    <property type="match status" value="1"/>
</dbReference>
<dbReference type="PANTHER" id="PTHR33280:SF1">
    <property type="entry name" value="LARGE RIBOSOMAL SUBUNIT PROTEIN BL31C"/>
    <property type="match status" value="1"/>
</dbReference>
<dbReference type="Pfam" id="PF01197">
    <property type="entry name" value="Ribosomal_L31"/>
    <property type="match status" value="1"/>
</dbReference>
<dbReference type="PRINTS" id="PR01249">
    <property type="entry name" value="RIBOSOMALL31"/>
</dbReference>
<dbReference type="SUPFAM" id="SSF143800">
    <property type="entry name" value="L28p-like"/>
    <property type="match status" value="1"/>
</dbReference>
<dbReference type="PROSITE" id="PS01143">
    <property type="entry name" value="RIBOSOMAL_L31"/>
    <property type="match status" value="1"/>
</dbReference>
<feature type="chain" id="PRO_1000060498" description="Large ribosomal subunit protein bL31B">
    <location>
        <begin position="1"/>
        <end position="87"/>
    </location>
</feature>
<sequence>MKPNIHPEYRTVVFHDTSIDEYFKIGSTIKTDREIELDGVTYPYVTIDVSSKSHPFYTGKLRTVASEGNVARFTQRFGRFVSTKKGA</sequence>
<reference key="1">
    <citation type="journal article" date="2008" name="J. Bacteriol.">
        <title>The pangenome structure of Escherichia coli: comparative genomic analysis of E. coli commensal and pathogenic isolates.</title>
        <authorList>
            <person name="Rasko D.A."/>
            <person name="Rosovitz M.J."/>
            <person name="Myers G.S.A."/>
            <person name="Mongodin E.F."/>
            <person name="Fricke W.F."/>
            <person name="Gajer P."/>
            <person name="Crabtree J."/>
            <person name="Sebaihia M."/>
            <person name="Thomson N.R."/>
            <person name="Chaudhuri R."/>
            <person name="Henderson I.R."/>
            <person name="Sperandio V."/>
            <person name="Ravel J."/>
        </authorList>
    </citation>
    <scope>NUCLEOTIDE SEQUENCE [LARGE SCALE GENOMIC DNA]</scope>
    <source>
        <strain>HS</strain>
    </source>
</reference>
<gene>
    <name evidence="1" type="primary">rpmE2</name>
    <name type="ordered locus">EcHS_A0350</name>
</gene>
<evidence type="ECO:0000255" key="1">
    <source>
        <dbReference type="HAMAP-Rule" id="MF_00502"/>
    </source>
</evidence>
<evidence type="ECO:0000305" key="2"/>
<proteinExistence type="inferred from homology"/>
<name>RL31B_ECOHS</name>
<organism>
    <name type="scientific">Escherichia coli O9:H4 (strain HS)</name>
    <dbReference type="NCBI Taxonomy" id="331112"/>
    <lineage>
        <taxon>Bacteria</taxon>
        <taxon>Pseudomonadati</taxon>
        <taxon>Pseudomonadota</taxon>
        <taxon>Gammaproteobacteria</taxon>
        <taxon>Enterobacterales</taxon>
        <taxon>Enterobacteriaceae</taxon>
        <taxon>Escherichia</taxon>
    </lineage>
</organism>